<dbReference type="EMBL" id="U20162">
    <property type="status" value="NOT_ANNOTATED_CDS"/>
    <property type="molecule type" value="Genomic_DNA"/>
</dbReference>
<dbReference type="EMBL" id="BK006945">
    <property type="protein sequence ID" value="DAA09715.1"/>
    <property type="molecule type" value="Genomic_DNA"/>
</dbReference>
<dbReference type="RefSeq" id="NP_878136.3">
    <property type="nucleotide sequence ID" value="NM_001184570.3"/>
</dbReference>
<dbReference type="SMR" id="Q3E742"/>
<dbReference type="BioGRID" id="36966">
    <property type="interactions" value="45"/>
</dbReference>
<dbReference type="FunCoup" id="Q3E742">
    <property type="interactions" value="115"/>
</dbReference>
<dbReference type="IntAct" id="Q3E742">
    <property type="interactions" value="1"/>
</dbReference>
<dbReference type="PaxDb" id="4932-YLR412C-A"/>
<dbReference type="EnsemblFungi" id="YLR412C-A_mRNA">
    <property type="protein sequence ID" value="YLR412C-A"/>
    <property type="gene ID" value="YLR412C-A"/>
</dbReference>
<dbReference type="GeneID" id="1466424"/>
<dbReference type="KEGG" id="sce:YLR412C-A"/>
<dbReference type="AGR" id="SGD:S000028572"/>
<dbReference type="SGD" id="S000028572">
    <property type="gene designation" value="YLR412C-A"/>
</dbReference>
<dbReference type="VEuPathDB" id="FungiDB:YLR412C-A"/>
<dbReference type="HOGENOM" id="CLU_2924484_0_0_1"/>
<dbReference type="InParanoid" id="Q3E742"/>
<dbReference type="BioCyc" id="YEAST:G3O-32583-MONOMER"/>
<dbReference type="BioGRID-ORCS" id="1466424">
    <property type="hits" value="0 hits in 10 CRISPR screens"/>
</dbReference>
<dbReference type="PRO" id="PR:Q3E742"/>
<dbReference type="Proteomes" id="UP000002311">
    <property type="component" value="Chromosome XII"/>
</dbReference>
<dbReference type="RNAct" id="Q3E742">
    <property type="molecule type" value="protein"/>
</dbReference>
<accession>Q3E742</accession>
<accession>D6VZ49</accession>
<evidence type="ECO:0000256" key="1">
    <source>
        <dbReference type="SAM" id="MobiDB-lite"/>
    </source>
</evidence>
<sequence>MHLCQNGHYYKPHRASAEKVPYLKKKKKNSRNEGKAKKKNEKKKIGTVEFFQQKKKEKKRVLNAVCGL</sequence>
<gene>
    <name type="ordered locus">YLR412C-A</name>
</gene>
<feature type="chain" id="PRO_0000247219" description="Uncharacterized protein YLR412C-A">
    <location>
        <begin position="1"/>
        <end position="68"/>
    </location>
</feature>
<feature type="region of interest" description="Disordered" evidence="1">
    <location>
        <begin position="1"/>
        <end position="42"/>
    </location>
</feature>
<protein>
    <recommendedName>
        <fullName>Uncharacterized protein YLR412C-A</fullName>
    </recommendedName>
</protein>
<keyword id="KW-1185">Reference proteome</keyword>
<name>YL412_YEAST</name>
<proteinExistence type="predicted"/>
<reference key="1">
    <citation type="journal article" date="1997" name="Nature">
        <title>The nucleotide sequence of Saccharomyces cerevisiae chromosome XII.</title>
        <authorList>
            <person name="Johnston M."/>
            <person name="Hillier L.W."/>
            <person name="Riles L."/>
            <person name="Albermann K."/>
            <person name="Andre B."/>
            <person name="Ansorge W."/>
            <person name="Benes V."/>
            <person name="Brueckner M."/>
            <person name="Delius H."/>
            <person name="Dubois E."/>
            <person name="Duesterhoeft A."/>
            <person name="Entian K.-D."/>
            <person name="Floeth M."/>
            <person name="Goffeau A."/>
            <person name="Hebling U."/>
            <person name="Heumann K."/>
            <person name="Heuss-Neitzel D."/>
            <person name="Hilbert H."/>
            <person name="Hilger F."/>
            <person name="Kleine K."/>
            <person name="Koetter P."/>
            <person name="Louis E.J."/>
            <person name="Messenguy F."/>
            <person name="Mewes H.-W."/>
            <person name="Miosga T."/>
            <person name="Moestl D."/>
            <person name="Mueller-Auer S."/>
            <person name="Nentwich U."/>
            <person name="Obermaier B."/>
            <person name="Piravandi E."/>
            <person name="Pohl T.M."/>
            <person name="Portetelle D."/>
            <person name="Purnelle B."/>
            <person name="Rechmann S."/>
            <person name="Rieger M."/>
            <person name="Rinke M."/>
            <person name="Rose M."/>
            <person name="Scharfe M."/>
            <person name="Scherens B."/>
            <person name="Scholler P."/>
            <person name="Schwager C."/>
            <person name="Schwarz S."/>
            <person name="Underwood A.P."/>
            <person name="Urrestarazu L.A."/>
            <person name="Vandenbol M."/>
            <person name="Verhasselt P."/>
            <person name="Vierendeels F."/>
            <person name="Voet M."/>
            <person name="Volckaert G."/>
            <person name="Voss H."/>
            <person name="Wambutt R."/>
            <person name="Wedler E."/>
            <person name="Wedler H."/>
            <person name="Zimmermann F.K."/>
            <person name="Zollner A."/>
            <person name="Hani J."/>
            <person name="Hoheisel J.D."/>
        </authorList>
    </citation>
    <scope>NUCLEOTIDE SEQUENCE [LARGE SCALE GENOMIC DNA]</scope>
    <source>
        <strain>ATCC 204508 / S288c</strain>
    </source>
</reference>
<reference key="2">
    <citation type="journal article" date="2014" name="G3 (Bethesda)">
        <title>The reference genome sequence of Saccharomyces cerevisiae: Then and now.</title>
        <authorList>
            <person name="Engel S.R."/>
            <person name="Dietrich F.S."/>
            <person name="Fisk D.G."/>
            <person name="Binkley G."/>
            <person name="Balakrishnan R."/>
            <person name="Costanzo M.C."/>
            <person name="Dwight S.S."/>
            <person name="Hitz B.C."/>
            <person name="Karra K."/>
            <person name="Nash R.S."/>
            <person name="Weng S."/>
            <person name="Wong E.D."/>
            <person name="Lloyd P."/>
            <person name="Skrzypek M.S."/>
            <person name="Miyasato S.R."/>
            <person name="Simison M."/>
            <person name="Cherry J.M."/>
        </authorList>
    </citation>
    <scope>GENOME REANNOTATION</scope>
    <source>
        <strain>ATCC 204508 / S288c</strain>
    </source>
</reference>
<reference key="3">
    <citation type="journal article" date="2003" name="Genome Res.">
        <title>Systematic discovery of new genes in the Saccharomyces cerevisiae genome.</title>
        <authorList>
            <person name="Kessler M.M."/>
            <person name="Zeng Q."/>
            <person name="Hogan S."/>
            <person name="Cook R."/>
            <person name="Morales A.J."/>
            <person name="Cottarel G."/>
        </authorList>
    </citation>
    <scope>GENOME REANNOTATION</scope>
</reference>
<organism>
    <name type="scientific">Saccharomyces cerevisiae (strain ATCC 204508 / S288c)</name>
    <name type="common">Baker's yeast</name>
    <dbReference type="NCBI Taxonomy" id="559292"/>
    <lineage>
        <taxon>Eukaryota</taxon>
        <taxon>Fungi</taxon>
        <taxon>Dikarya</taxon>
        <taxon>Ascomycota</taxon>
        <taxon>Saccharomycotina</taxon>
        <taxon>Saccharomycetes</taxon>
        <taxon>Saccharomycetales</taxon>
        <taxon>Saccharomycetaceae</taxon>
        <taxon>Saccharomyces</taxon>
    </lineage>
</organism>